<reference key="1">
    <citation type="journal article" date="2004" name="Science">
        <title>The genomic sequence of the accidental pathogen Legionella pneumophila.</title>
        <authorList>
            <person name="Chien M."/>
            <person name="Morozova I."/>
            <person name="Shi S."/>
            <person name="Sheng H."/>
            <person name="Chen J."/>
            <person name="Gomez S.M."/>
            <person name="Asamani G."/>
            <person name="Hill K."/>
            <person name="Nuara J."/>
            <person name="Feder M."/>
            <person name="Rineer J."/>
            <person name="Greenberg J.J."/>
            <person name="Steshenko V."/>
            <person name="Park S.H."/>
            <person name="Zhao B."/>
            <person name="Teplitskaya E."/>
            <person name="Edwards J.R."/>
            <person name="Pampou S."/>
            <person name="Georghiou A."/>
            <person name="Chou I.-C."/>
            <person name="Iannuccilli W."/>
            <person name="Ulz M.E."/>
            <person name="Kim D.H."/>
            <person name="Geringer-Sameth A."/>
            <person name="Goldsberry C."/>
            <person name="Morozov P."/>
            <person name="Fischer S.G."/>
            <person name="Segal G."/>
            <person name="Qu X."/>
            <person name="Rzhetsky A."/>
            <person name="Zhang P."/>
            <person name="Cayanis E."/>
            <person name="De Jong P.J."/>
            <person name="Ju J."/>
            <person name="Kalachikov S."/>
            <person name="Shuman H.A."/>
            <person name="Russo J.J."/>
        </authorList>
    </citation>
    <scope>NUCLEOTIDE SEQUENCE [LARGE SCALE GENOMIC DNA]</scope>
    <source>
        <strain>Philadelphia 1 / ATCC 33152 / DSM 7513</strain>
    </source>
</reference>
<proteinExistence type="evidence at protein level"/>
<comment type="function">
    <text evidence="2">Catalyzes two reactions in de novo purine nucleotide biosynthesis. Catalyzes the breakdown of 5-aminoimidazole- (N-succinylocarboxamide) ribotide (SAICAR or 2-[5-amino-1-(5-phospho-beta-D-ribosyl)imidazole-4-carboxamido]succinate) to 5-aminoimidazole-4-carboxamide ribotide (AICAR or 5-amino-1-(5-phospho-beta-D-ribosyl)imidazole-4-carboxamide) and fumarate, and of adenylosuccinate (ADS or N(6)-(1,2-dicarboxyethyl)-AMP) to adenosine monophosphate (AMP) and fumarate.</text>
</comment>
<comment type="catalytic activity">
    <reaction evidence="2">
        <text>N(6)-(1,2-dicarboxyethyl)-AMP = fumarate + AMP</text>
        <dbReference type="Rhea" id="RHEA:16853"/>
        <dbReference type="ChEBI" id="CHEBI:29806"/>
        <dbReference type="ChEBI" id="CHEBI:57567"/>
        <dbReference type="ChEBI" id="CHEBI:456215"/>
        <dbReference type="EC" id="4.3.2.2"/>
    </reaction>
    <physiologicalReaction direction="left-to-right" evidence="2">
        <dbReference type="Rhea" id="RHEA:16854"/>
    </physiologicalReaction>
</comment>
<comment type="catalytic activity">
    <reaction evidence="2">
        <text>(2S)-2-[5-amino-1-(5-phospho-beta-D-ribosyl)imidazole-4-carboxamido]succinate = 5-amino-1-(5-phospho-beta-D-ribosyl)imidazole-4-carboxamide + fumarate</text>
        <dbReference type="Rhea" id="RHEA:23920"/>
        <dbReference type="ChEBI" id="CHEBI:29806"/>
        <dbReference type="ChEBI" id="CHEBI:58443"/>
        <dbReference type="ChEBI" id="CHEBI:58475"/>
        <dbReference type="EC" id="4.3.2.2"/>
    </reaction>
    <physiologicalReaction direction="left-to-right" evidence="2">
        <dbReference type="Rhea" id="RHEA:23921"/>
    </physiologicalReaction>
</comment>
<comment type="pathway">
    <text>Purine metabolism; AMP biosynthesis via de novo pathway; AMP from IMP: step 2/2.</text>
</comment>
<comment type="pathway">
    <text>Purine metabolism; IMP biosynthesis via de novo pathway; 5-amino-1-(5-phospho-D-ribosyl)imidazole-4-carboxamide from 5-amino-1-(5-phospho-D-ribosyl)imidazole-4-carboxylate: step 2/2.</text>
</comment>
<comment type="subunit">
    <text evidence="1">Homotetramer. Residues from neighboring subunits contribute catalytic and substrate-binding residues to each active site (By similarity).</text>
</comment>
<comment type="similarity">
    <text evidence="3">Belongs to the lyase 1 family. Adenylosuccinate lyase subfamily.</text>
</comment>
<name>PUR8_LEGPH</name>
<sequence length="456" mass="51403">MTLTALNAISPIDGRYVNKTRALSPYFSEFALTYYRLMVEIKWFESLAANDTIPEVPALDNKARKFLSDLISNFNESEAEKIKEFEKQTNHDVKAVEYYLQDKFQENEQLKSCVAFIHFACTSEDINNLAYALMIKQAIAQVIQPTIAEIMGSITLLGKQHADVAMLSRTHGQPATPTTMGKELVNFVARLKRPQQQLAEVLIPAKFNGAVGNYNAHVAAYPEVDWRKHCANFVTSLGLSFNAYTTQIEPHDGIAEVSQIMVRINNILLDYTQDIWSYISLGYFKQKTIAEEVGSSTMPHKVNPIDFENAEGNLGLSNALFIHFANKLTQSRMQRDLSDSTVLRNLGVAFSYSLIAYHSVAKGNDKLQINKSALQKDLSENWEVLAEAIQTVMRRYNEPNAYEQLKELTRGQMIDAENLKKFIKTLSIPEEAKAELMKLTPETYTGLATQLVKAFS</sequence>
<keyword id="KW-0002">3D-structure</keyword>
<keyword id="KW-0456">Lyase</keyword>
<keyword id="KW-0658">Purine biosynthesis</keyword>
<keyword id="KW-1185">Reference proteome</keyword>
<dbReference type="EC" id="4.3.2.2" evidence="2"/>
<dbReference type="EMBL" id="AE017354">
    <property type="protein sequence ID" value="AAU26889.1"/>
    <property type="molecule type" value="Genomic_DNA"/>
</dbReference>
<dbReference type="RefSeq" id="WP_010946537.1">
    <property type="nucleotide sequence ID" value="NC_002942.5"/>
</dbReference>
<dbReference type="RefSeq" id="YP_094836.1">
    <property type="nucleotide sequence ID" value="NC_002942.5"/>
</dbReference>
<dbReference type="PDB" id="3BHG">
    <property type="method" value="X-ray"/>
    <property type="resolution" value="1.90 A"/>
    <property type="chains" value="A=1-456"/>
</dbReference>
<dbReference type="PDBsum" id="3BHG"/>
<dbReference type="SMR" id="Q5ZXD1"/>
<dbReference type="STRING" id="272624.lpg0801"/>
<dbReference type="PaxDb" id="272624-lpg0801"/>
<dbReference type="GeneID" id="57034789"/>
<dbReference type="KEGG" id="lpn:lpg0801"/>
<dbReference type="PATRIC" id="fig|272624.6.peg.828"/>
<dbReference type="eggNOG" id="COG0015">
    <property type="taxonomic scope" value="Bacteria"/>
</dbReference>
<dbReference type="HOGENOM" id="CLU_025566_2_0_6"/>
<dbReference type="OrthoDB" id="9768878at2"/>
<dbReference type="UniPathway" id="UPA00074">
    <property type="reaction ID" value="UER00132"/>
</dbReference>
<dbReference type="UniPathway" id="UPA00075">
    <property type="reaction ID" value="UER00336"/>
</dbReference>
<dbReference type="EvolutionaryTrace" id="Q5ZXD1"/>
<dbReference type="Proteomes" id="UP000000609">
    <property type="component" value="Chromosome"/>
</dbReference>
<dbReference type="GO" id="GO:0005829">
    <property type="term" value="C:cytosol"/>
    <property type="evidence" value="ECO:0007669"/>
    <property type="project" value="TreeGrafter"/>
</dbReference>
<dbReference type="GO" id="GO:0070626">
    <property type="term" value="F:(S)-2-(5-amino-1-(5-phospho-D-ribosyl)imidazole-4-carboxamido) succinate lyase (fumarate-forming) activity"/>
    <property type="evidence" value="ECO:0007669"/>
    <property type="project" value="RHEA"/>
</dbReference>
<dbReference type="GO" id="GO:0004018">
    <property type="term" value="F:N6-(1,2-dicarboxyethyl)AMP AMP-lyase (fumarate-forming) activity"/>
    <property type="evidence" value="ECO:0007669"/>
    <property type="project" value="InterPro"/>
</dbReference>
<dbReference type="GO" id="GO:0044208">
    <property type="term" value="P:'de novo' AMP biosynthetic process"/>
    <property type="evidence" value="ECO:0007669"/>
    <property type="project" value="UniProtKB-UniPathway"/>
</dbReference>
<dbReference type="GO" id="GO:0006189">
    <property type="term" value="P:'de novo' IMP biosynthetic process"/>
    <property type="evidence" value="ECO:0007669"/>
    <property type="project" value="UniProtKB-UniPathway"/>
</dbReference>
<dbReference type="CDD" id="cd01598">
    <property type="entry name" value="PurB"/>
    <property type="match status" value="1"/>
</dbReference>
<dbReference type="FunFam" id="1.20.200.10:FF:000004">
    <property type="entry name" value="Adenylosuccinate lyase"/>
    <property type="match status" value="1"/>
</dbReference>
<dbReference type="Gene3D" id="1.10.40.30">
    <property type="entry name" value="Fumarase/aspartase (C-terminal domain)"/>
    <property type="match status" value="1"/>
</dbReference>
<dbReference type="Gene3D" id="1.20.200.10">
    <property type="entry name" value="Fumarase/aspartase (Central domain)"/>
    <property type="match status" value="1"/>
</dbReference>
<dbReference type="Gene3D" id="1.10.275.10">
    <property type="entry name" value="Fumarase/aspartase (N-terminal domain)"/>
    <property type="match status" value="1"/>
</dbReference>
<dbReference type="InterPro" id="IPR024083">
    <property type="entry name" value="Fumarase/histidase_N"/>
</dbReference>
<dbReference type="InterPro" id="IPR020557">
    <property type="entry name" value="Fumarate_lyase_CS"/>
</dbReference>
<dbReference type="InterPro" id="IPR000362">
    <property type="entry name" value="Fumarate_lyase_fam"/>
</dbReference>
<dbReference type="InterPro" id="IPR022761">
    <property type="entry name" value="Fumarate_lyase_N"/>
</dbReference>
<dbReference type="InterPro" id="IPR008948">
    <property type="entry name" value="L-Aspartase-like"/>
</dbReference>
<dbReference type="InterPro" id="IPR004769">
    <property type="entry name" value="Pur_lyase"/>
</dbReference>
<dbReference type="InterPro" id="IPR047136">
    <property type="entry name" value="PurB_bact"/>
</dbReference>
<dbReference type="InterPro" id="IPR013539">
    <property type="entry name" value="PurB_C"/>
</dbReference>
<dbReference type="NCBIfam" id="NF006764">
    <property type="entry name" value="PRK09285.1"/>
    <property type="match status" value="1"/>
</dbReference>
<dbReference type="NCBIfam" id="TIGR00928">
    <property type="entry name" value="purB"/>
    <property type="match status" value="1"/>
</dbReference>
<dbReference type="PANTHER" id="PTHR43411">
    <property type="entry name" value="ADENYLOSUCCINATE LYASE"/>
    <property type="match status" value="1"/>
</dbReference>
<dbReference type="PANTHER" id="PTHR43411:SF1">
    <property type="entry name" value="ADENYLOSUCCINATE LYASE"/>
    <property type="match status" value="1"/>
</dbReference>
<dbReference type="Pfam" id="PF08328">
    <property type="entry name" value="ASL_C"/>
    <property type="match status" value="1"/>
</dbReference>
<dbReference type="Pfam" id="PF00206">
    <property type="entry name" value="Lyase_1"/>
    <property type="match status" value="1"/>
</dbReference>
<dbReference type="PRINTS" id="PR00149">
    <property type="entry name" value="FUMRATELYASE"/>
</dbReference>
<dbReference type="SUPFAM" id="SSF48557">
    <property type="entry name" value="L-aspartase-like"/>
    <property type="match status" value="1"/>
</dbReference>
<dbReference type="PROSITE" id="PS00163">
    <property type="entry name" value="FUMARATE_LYASES"/>
    <property type="match status" value="1"/>
</dbReference>
<feature type="chain" id="PRO_0000349271" description="Adenylosuccinate lyase">
    <location>
        <begin position="1"/>
        <end position="456"/>
    </location>
</feature>
<feature type="active site" description="Proton donor/acceptor" evidence="2">
    <location>
        <position position="171"/>
    </location>
</feature>
<feature type="active site" description="Proton donor/acceptor" evidence="2">
    <location>
        <position position="295"/>
    </location>
</feature>
<feature type="binding site" evidence="2">
    <location>
        <begin position="15"/>
        <end position="16"/>
    </location>
    <ligand>
        <name>N(6)-(1,2-dicarboxyethyl)-AMP</name>
        <dbReference type="ChEBI" id="CHEBI:57567"/>
    </ligand>
</feature>
<feature type="binding site" evidence="2">
    <location>
        <begin position="90"/>
        <end position="92"/>
    </location>
    <ligand>
        <name>N(6)-(1,2-dicarboxyethyl)-AMP</name>
        <dbReference type="ChEBI" id="CHEBI:57567"/>
    </ligand>
</feature>
<feature type="binding site" evidence="2">
    <location>
        <begin position="122"/>
        <end position="123"/>
    </location>
    <ligand>
        <name>N(6)-(1,2-dicarboxyethyl)-AMP</name>
        <dbReference type="ChEBI" id="CHEBI:57567"/>
    </ligand>
</feature>
<feature type="binding site" evidence="2">
    <location>
        <position position="247"/>
    </location>
    <ligand>
        <name>N(6)-(1,2-dicarboxyethyl)-AMP</name>
        <dbReference type="ChEBI" id="CHEBI:57567"/>
    </ligand>
</feature>
<feature type="binding site" evidence="2">
    <location>
        <position position="296"/>
    </location>
    <ligand>
        <name>N(6)-(1,2-dicarboxyethyl)-AMP</name>
        <dbReference type="ChEBI" id="CHEBI:57567"/>
    </ligand>
</feature>
<feature type="binding site" evidence="2">
    <location>
        <begin position="301"/>
        <end position="303"/>
    </location>
    <ligand>
        <name>N(6)-(1,2-dicarboxyethyl)-AMP</name>
        <dbReference type="ChEBI" id="CHEBI:57567"/>
    </ligand>
</feature>
<feature type="binding site" evidence="2">
    <location>
        <position position="309"/>
    </location>
    <ligand>
        <name>N(6)-(1,2-dicarboxyethyl)-AMP</name>
        <dbReference type="ChEBI" id="CHEBI:57567"/>
    </ligand>
</feature>
<feature type="binding site" evidence="2">
    <location>
        <position position="335"/>
    </location>
    <ligand>
        <name>N(6)-(1,2-dicarboxyethyl)-AMP</name>
        <dbReference type="ChEBI" id="CHEBI:57567"/>
    </ligand>
</feature>
<feature type="binding site" evidence="2">
    <location>
        <begin position="340"/>
        <end position="344"/>
    </location>
    <ligand>
        <name>N(6)-(1,2-dicarboxyethyl)-AMP</name>
        <dbReference type="ChEBI" id="CHEBI:57567"/>
    </ligand>
</feature>
<feature type="helix" evidence="4">
    <location>
        <begin position="5"/>
        <end position="7"/>
    </location>
</feature>
<feature type="turn" evidence="4">
    <location>
        <begin position="11"/>
        <end position="16"/>
    </location>
</feature>
<feature type="helix" evidence="4">
    <location>
        <begin position="17"/>
        <end position="20"/>
    </location>
</feature>
<feature type="helix" evidence="4">
    <location>
        <begin position="21"/>
        <end position="23"/>
    </location>
</feature>
<feature type="turn" evidence="4">
    <location>
        <begin position="24"/>
        <end position="26"/>
    </location>
</feature>
<feature type="helix" evidence="4">
    <location>
        <begin position="29"/>
        <end position="48"/>
    </location>
</feature>
<feature type="helix" evidence="4">
    <location>
        <begin position="61"/>
        <end position="72"/>
    </location>
</feature>
<feature type="helix" evidence="4">
    <location>
        <begin position="76"/>
        <end position="85"/>
    </location>
</feature>
<feature type="turn" evidence="4">
    <location>
        <begin position="86"/>
        <end position="88"/>
    </location>
</feature>
<feature type="helix" evidence="4">
    <location>
        <begin position="92"/>
        <end position="104"/>
    </location>
</feature>
<feature type="helix" evidence="4">
    <location>
        <begin position="110"/>
        <end position="116"/>
    </location>
</feature>
<feature type="turn" evidence="4">
    <location>
        <begin position="117"/>
        <end position="120"/>
    </location>
</feature>
<feature type="helix" evidence="4">
    <location>
        <begin position="123"/>
        <end position="141"/>
    </location>
</feature>
<feature type="helix" evidence="4">
    <location>
        <begin position="143"/>
        <end position="160"/>
    </location>
</feature>
<feature type="turn" evidence="4">
    <location>
        <begin position="161"/>
        <end position="163"/>
    </location>
</feature>
<feature type="strand" evidence="4">
    <location>
        <begin position="165"/>
        <end position="170"/>
    </location>
</feature>
<feature type="strand" evidence="4">
    <location>
        <begin position="173"/>
        <end position="179"/>
    </location>
</feature>
<feature type="helix" evidence="4">
    <location>
        <begin position="180"/>
        <end position="200"/>
    </location>
</feature>
<feature type="strand" evidence="4">
    <location>
        <begin position="210"/>
        <end position="213"/>
    </location>
</feature>
<feature type="helix" evidence="4">
    <location>
        <begin position="215"/>
        <end position="220"/>
    </location>
</feature>
<feature type="helix" evidence="4">
    <location>
        <begin position="226"/>
        <end position="236"/>
    </location>
</feature>
<feature type="strand" evidence="4">
    <location>
        <begin position="246"/>
        <end position="248"/>
    </location>
</feature>
<feature type="helix" evidence="4">
    <location>
        <begin position="252"/>
        <end position="280"/>
    </location>
</feature>
<feature type="strand" evidence="4">
    <location>
        <begin position="283"/>
        <end position="286"/>
    </location>
</feature>
<feature type="helix" evidence="4">
    <location>
        <begin position="305"/>
        <end position="327"/>
    </location>
</feature>
<feature type="helix" evidence="4">
    <location>
        <begin position="339"/>
        <end position="343"/>
    </location>
</feature>
<feature type="helix" evidence="4">
    <location>
        <begin position="346"/>
        <end position="364"/>
    </location>
</feature>
<feature type="strand" evidence="4">
    <location>
        <begin position="367"/>
        <end position="369"/>
    </location>
</feature>
<feature type="helix" evidence="4">
    <location>
        <begin position="371"/>
        <end position="379"/>
    </location>
</feature>
<feature type="helix" evidence="4">
    <location>
        <begin position="382"/>
        <end position="385"/>
    </location>
</feature>
<feature type="helix" evidence="4">
    <location>
        <begin position="386"/>
        <end position="395"/>
    </location>
</feature>
<feature type="helix" evidence="4">
    <location>
        <begin position="401"/>
        <end position="409"/>
    </location>
</feature>
<feature type="helix" evidence="4">
    <location>
        <begin position="416"/>
        <end position="424"/>
    </location>
</feature>
<feature type="helix" evidence="4">
    <location>
        <begin position="430"/>
        <end position="438"/>
    </location>
</feature>
<feature type="helix" evidence="4">
    <location>
        <begin position="441"/>
        <end position="443"/>
    </location>
</feature>
<feature type="helix" evidence="4">
    <location>
        <begin position="448"/>
        <end position="454"/>
    </location>
</feature>
<gene>
    <name type="primary">purB</name>
    <name type="ordered locus">lpg0801</name>
</gene>
<evidence type="ECO:0000250" key="1"/>
<evidence type="ECO:0000250" key="2">
    <source>
        <dbReference type="UniProtKB" id="P0AB89"/>
    </source>
</evidence>
<evidence type="ECO:0000305" key="3"/>
<evidence type="ECO:0007829" key="4">
    <source>
        <dbReference type="PDB" id="3BHG"/>
    </source>
</evidence>
<accession>Q5ZXD1</accession>
<organism>
    <name type="scientific">Legionella pneumophila subsp. pneumophila (strain Philadelphia 1 / ATCC 33152 / DSM 7513)</name>
    <dbReference type="NCBI Taxonomy" id="272624"/>
    <lineage>
        <taxon>Bacteria</taxon>
        <taxon>Pseudomonadati</taxon>
        <taxon>Pseudomonadota</taxon>
        <taxon>Gammaproteobacteria</taxon>
        <taxon>Legionellales</taxon>
        <taxon>Legionellaceae</taxon>
        <taxon>Legionella</taxon>
    </lineage>
</organism>
<protein>
    <recommendedName>
        <fullName>Adenylosuccinate lyase</fullName>
        <shortName>ASL</shortName>
        <ecNumber evidence="2">4.3.2.2</ecNumber>
    </recommendedName>
    <alternativeName>
        <fullName>Adenylosuccinase</fullName>
        <shortName>ASase</shortName>
    </alternativeName>
</protein>